<keyword id="KW-0010">Activator</keyword>
<keyword id="KW-0025">Alternative splicing</keyword>
<keyword id="KW-0963">Cytoplasm</keyword>
<keyword id="KW-0238">DNA-binding</keyword>
<keyword id="KW-1017">Isopeptide bond</keyword>
<keyword id="KW-0539">Nucleus</keyword>
<keyword id="KW-0597">Phosphoprotein</keyword>
<keyword id="KW-1185">Reference proteome</keyword>
<keyword id="KW-0804">Transcription</keyword>
<keyword id="KW-0805">Transcription regulation</keyword>
<keyword id="KW-0832">Ubl conjugation</keyword>
<gene>
    <name type="primary">Runx3</name>
    <name type="synonym">Aml2</name>
    <name type="synonym">Cbfa3</name>
    <name type="synonym">Pebp2a3</name>
</gene>
<proteinExistence type="evidence at protein level"/>
<name>RUNX3_MOUSE</name>
<accession>Q64131</accession>
<accession>B2FDG4</accession>
<accession>Q99P92</accession>
<accession>Q9R199</accession>
<comment type="function">
    <text evidence="2 5 7 8 9">Forms the heterodimeric complex core-binding factor (CBF) with CBFB. RUNX members modulate the transcription of their target genes through recognizing the core consensus binding sequence 5'-TGTGGT-3', or very rarely, 5'-TGCGGT-3', within their regulatory regions via their runt domain, while CBFB is a non-DNA-binding regulatory subunit that allosterically enhances the sequence-specific DNA-binding capacity of RUNX. The heterodimers bind to the core site of a number of enhancers and promoters, including murine leukemia virus, polyomavirus enhancer, T-cell receptor enhancers, LCK, IL3 and GM-CSF promoters (Probable). May be involved in the control of cellular proliferation and/or differentiation. In association with ZFHX3, up-regulates CDKN1A promoter activity following TGF-beta stimulation (By similarity). CBF complexes repress ZBTB7B transcription factor during cytotoxic (CD8+) T cell development. They bind to RUNX-binding sequence within the ZBTB7B locus acting as transcriptional silencer and allowing for cytotoxic T cell differentiation (PubMed:18258917). CBF complexes binding to the transcriptional silencer is essential for recruitment of nuclear protein complexes that catalyze epigenetic modifications to establish epigenetic ZBTB7B silencing (PubMed:23481257). Necessary for the development and survival of sensory neurons expressing parvalbumin (PubMed:39919739).</text>
</comment>
<comment type="subunit">
    <text evidence="2 6 10">Heterodimer with CBFB. RUNX3 binds DNA as a monomer and through the Runt domain. DNA-binding is increased by heterodimerization (Probable). Interacts with TLE1 and SUV39H1. The tyrosine phosphorylated form (via runt domain) interacts with SRC (via protein kinase domain). Interacts with FYN and LCK. Interacts with FOXP3. Interacts with ZFHX3. Interacts with TBX21 (PubMed:21151104).</text>
</comment>
<comment type="subcellular location">
    <subcellularLocation>
        <location evidence="2">Nucleus</location>
    </subcellularLocation>
    <subcellularLocation>
        <location evidence="2">Cytoplasm</location>
    </subcellularLocation>
    <text evidence="2">The tyrosine phosphorylated form localizes to the cytoplasm. Translocates from the cytoplasm to the nucleus following TGF-beta stimulation.</text>
</comment>
<comment type="alternative products">
    <event type="alternative splicing"/>
    <isoform>
        <id>Q64131-1</id>
        <name>1</name>
        <sequence type="displayed"/>
    </isoform>
    <isoform>
        <id>Q64131-2</id>
        <name>2</name>
        <sequence type="described" ref="VSP_005950"/>
    </isoform>
</comment>
<comment type="domain">
    <text>A proline/serine/threonine rich region at the C-terminus is necessary for transcriptional activation of target genes.</text>
</comment>
<comment type="PTM">
    <text evidence="1">Phosphorylated on tyrosine residues by SRC. Phosphorylated by LCK and FYN (By similarity).</text>
</comment>
<comment type="disruption phenotype">
    <text evidence="8">Mutants show reduced body weight with decreased body fat percentage and reduced mobility. They display reduced fasting blood glucose levels and improved glucose tolerance with reduced levels of insulin and increased insulin sensitivity.</text>
</comment>
<sequence length="409" mass="43518">MRIPVDPSTSRRFTPPSTAFPCGGGGGGKMGENSGALSAQATAGPGGRTRPEVRSMVDVLADHAGELVRTDSPNFLCSVLPSHWRCNKTLPVAFKVVALGDVPDGTVVTVMAGNDENYSAELRNASAVMKNQVARFNDLRFVGRSGRGKSFTLTITVFTNPTQVATYHRAIKVTVDGPREPRRHRQKIEDQTKAFPDRFGDLRMRVTPSTPSPRGSLSTTSHFSSQAQTPIQGSSDLNPFSDPRQFDRSFPTLQSLTESRFPDPRMHYPGAMSAAFPYSATPSGTSLGSLSVAGMPASSRFHHTYLPPPYPGAPQSQSGPFQANPAPYHLFYGASSGSYQFSMAAAGGGERSPTRMLTSCPSGASVSAGNLMNPSLGQADGVEADGSHSNSPTALSTPGRMDEAVWRPY</sequence>
<feature type="chain" id="PRO_0000174663" description="Runt-related transcription factor 3">
    <location>
        <begin position="1"/>
        <end position="409"/>
    </location>
</feature>
<feature type="domain" description="Runt" evidence="3">
    <location>
        <begin position="55"/>
        <end position="183"/>
    </location>
</feature>
<feature type="region of interest" description="Disordered" evidence="4">
    <location>
        <begin position="1"/>
        <end position="51"/>
    </location>
</feature>
<feature type="region of interest" description="Disordered" evidence="4">
    <location>
        <begin position="177"/>
        <end position="248"/>
    </location>
</feature>
<feature type="region of interest" description="Disordered" evidence="4">
    <location>
        <begin position="346"/>
        <end position="409"/>
    </location>
</feature>
<feature type="compositionally biased region" description="Polar residues" evidence="4">
    <location>
        <begin position="7"/>
        <end position="17"/>
    </location>
</feature>
<feature type="compositionally biased region" description="Basic and acidic residues" evidence="4">
    <location>
        <begin position="187"/>
        <end position="204"/>
    </location>
</feature>
<feature type="compositionally biased region" description="Polar residues" evidence="4">
    <location>
        <begin position="207"/>
        <end position="238"/>
    </location>
</feature>
<feature type="compositionally biased region" description="Polar residues" evidence="4">
    <location>
        <begin position="355"/>
        <end position="376"/>
    </location>
</feature>
<feature type="compositionally biased region" description="Polar residues" evidence="4">
    <location>
        <begin position="387"/>
        <end position="396"/>
    </location>
</feature>
<feature type="compositionally biased region" description="Basic and acidic residues" evidence="4">
    <location>
        <begin position="400"/>
        <end position="409"/>
    </location>
</feature>
<feature type="modified residue" description="Phosphoserine" evidence="2">
    <location>
        <position position="241"/>
    </location>
</feature>
<feature type="cross-link" description="Glycyl lysine isopeptide (Lys-Gly) (interchain with G-Cter in SUMO2)" evidence="2">
    <location>
        <position position="193"/>
    </location>
</feature>
<feature type="splice variant" id="VSP_005950" description="In isoform 2." evidence="9">
    <original>MRIPV</original>
    <variation>MASNSIFDSFPQLYTNLHT</variation>
    <location>
        <begin position="1"/>
        <end position="5"/>
    </location>
</feature>
<feature type="mutagenesis site" description="Inhibits repression of ZBTB7B expression." evidence="7">
    <location>
        <begin position="405"/>
        <end position="409"/>
    </location>
</feature>
<feature type="sequence conflict" description="In Ref. 1; AAD38985." evidence="9" ref="1">
    <original>AQ</original>
    <variation>PK</variation>
    <location>
        <begin position="227"/>
        <end position="228"/>
    </location>
</feature>
<feature type="sequence conflict" description="In Ref. 1; AAD38985." evidence="9" ref="1">
    <original>SSD</original>
    <variation>FLN</variation>
    <location>
        <begin position="234"/>
        <end position="236"/>
    </location>
</feature>
<reference key="1">
    <citation type="journal article" date="2006" name="Proc. Natl. Acad. Sci. U.S.A.">
        <title>Groucho/transducin-like Enhancer-of-split (TLE)-dependent and -independent transcriptional regulation by Runx3.</title>
        <authorList>
            <person name="Yarmus M."/>
            <person name="Woolf E."/>
            <person name="Bernstein Y."/>
            <person name="Fainaru O."/>
            <person name="Negreanu V."/>
            <person name="Levanon D."/>
            <person name="Groner Y."/>
        </authorList>
    </citation>
    <scope>NUCLEOTIDE SEQUENCE [MRNA] (ISOFORM 1)</scope>
    <source>
        <tissue>Spleen</tissue>
    </source>
</reference>
<reference key="2">
    <citation type="journal article" date="2009" name="PLoS Biol.">
        <title>Lineage-specific biology revealed by a finished genome assembly of the mouse.</title>
        <authorList>
            <person name="Church D.M."/>
            <person name="Goodstadt L."/>
            <person name="Hillier L.W."/>
            <person name="Zody M.C."/>
            <person name="Goldstein S."/>
            <person name="She X."/>
            <person name="Bult C.J."/>
            <person name="Agarwala R."/>
            <person name="Cherry J.L."/>
            <person name="DiCuccio M."/>
            <person name="Hlavina W."/>
            <person name="Kapustin Y."/>
            <person name="Meric P."/>
            <person name="Maglott D."/>
            <person name="Birtle Z."/>
            <person name="Marques A.C."/>
            <person name="Graves T."/>
            <person name="Zhou S."/>
            <person name="Teague B."/>
            <person name="Potamousis K."/>
            <person name="Churas C."/>
            <person name="Place M."/>
            <person name="Herschleb J."/>
            <person name="Runnheim R."/>
            <person name="Forrest D."/>
            <person name="Amos-Landgraf J."/>
            <person name="Schwartz D.C."/>
            <person name="Cheng Z."/>
            <person name="Lindblad-Toh K."/>
            <person name="Eichler E.E."/>
            <person name="Ponting C.P."/>
        </authorList>
    </citation>
    <scope>NUCLEOTIDE SEQUENCE [LARGE SCALE GENOMIC DNA]</scope>
    <source>
        <strain>C57BL/6J</strain>
    </source>
</reference>
<reference key="3">
    <citation type="submission" date="2005-07" db="EMBL/GenBank/DDBJ databases">
        <authorList>
            <person name="Mural R.J."/>
            <person name="Adams M.D."/>
            <person name="Myers E.W."/>
            <person name="Smith H.O."/>
            <person name="Venter J.C."/>
        </authorList>
    </citation>
    <scope>NUCLEOTIDE SEQUENCE [LARGE SCALE GENOMIC DNA]</scope>
</reference>
<reference key="4">
    <citation type="journal article" date="1995" name="Genomics">
        <title>Identification of a new murine runt domain-containing gene, Cbfa3, and localization of the human homolog, CBFA3, to chromosome 1p35-pter.</title>
        <authorList>
            <person name="Wijmenga C."/>
            <person name="Speck N.A."/>
            <person name="Dracopoli N.C."/>
            <person name="Hofker M.H."/>
            <person name="Liu P."/>
            <person name="Collins F.S."/>
        </authorList>
    </citation>
    <scope>NUCLEOTIDE SEQUENCE [MRNA] OF 92-167</scope>
</reference>
<reference key="5">
    <citation type="journal article" date="1995" name="Genomics">
        <title>Identification and chromosomal mapping of a third mouse runt-like locus.</title>
        <authorList>
            <person name="Calabi F."/>
            <person name="Rhodes M."/>
            <person name="Williamson P."/>
            <person name="Boyd Y."/>
        </authorList>
    </citation>
    <scope>NUCLEOTIDE SEQUENCE [GENOMIC DNA] OF 1-95 (ISOFORM 1)</scope>
</reference>
<reference key="6">
    <citation type="submission" date="1999-07" db="EMBL/GenBank/DDBJ databases">
        <title>The mouse AML2 gene - proximal promoter region.</title>
        <authorList>
            <person name="Negreanu V."/>
            <person name="Levanon D."/>
            <person name="Bettoun J.D."/>
            <person name="Groner Y."/>
        </authorList>
    </citation>
    <scope>NUCLEOTIDE SEQUENCE [GENOMIC DNA] OF 1-95 (ISOFORM 1)</scope>
    <source>
        <strain>129/Sv</strain>
    </source>
</reference>
<reference key="7">
    <citation type="journal article" date="2001" name="Gene">
        <title>The RUNX3 gene -- sequence, structure and regulated expression.</title>
        <authorList>
            <person name="Bangsow C."/>
            <person name="Rubins N."/>
            <person name="Glusman G."/>
            <person name="Bernstein Y."/>
            <person name="Negreanu V."/>
            <person name="Goldenberg D."/>
            <person name="Lotem J."/>
            <person name="Ben-Asher E."/>
            <person name="Lancet D."/>
            <person name="Levanon D."/>
            <person name="Groner Y."/>
        </authorList>
    </citation>
    <scope>PARTIAL NUCLEOTIDE SEQUENCE [GENOMIC DNA] (ISOFORM 2)</scope>
</reference>
<reference key="8">
    <citation type="journal article" date="2008" name="Science">
        <title>Repression of the transcription factor Th-POK by Runx complexes in cytotoxic T cell development.</title>
        <authorList>
            <person name="Setoguchi R."/>
            <person name="Tachibana M."/>
            <person name="Naoe Y."/>
            <person name="Muroi S."/>
            <person name="Akiyama K."/>
            <person name="Tezuka C."/>
            <person name="Okuda T."/>
            <person name="Taniuchi I."/>
        </authorList>
    </citation>
    <scope>FUNCTION</scope>
</reference>
<reference key="9">
    <citation type="journal article" date="2013" name="EMBO J.">
        <title>Epigenetic Thpok silencing limits the time window to choose CD4(+) helper-lineage fate in the thymus.</title>
        <authorList>
            <person name="Tanaka H."/>
            <person name="Naito T."/>
            <person name="Muroi S."/>
            <person name="Seo W."/>
            <person name="Chihara R."/>
            <person name="Miyamoto C."/>
            <person name="Kominami R."/>
            <person name="Taniuchi I."/>
        </authorList>
    </citation>
    <scope>FUNCTION</scope>
    <scope>MUTAGENESIS OF 405-VAL--TYR-409</scope>
</reference>
<reference key="10">
    <citation type="journal article" date="2011" name="Nat. Immunol.">
        <title>T-bet represses T(H)17 differentiation by preventing Runx1-mediated activation of the gene encoding RORgammat.</title>
        <authorList>
            <person name="Lazarevic V."/>
            <person name="Chen X."/>
            <person name="Shim J.H."/>
            <person name="Hwang E.S."/>
            <person name="Jang E."/>
            <person name="Bolm A.N."/>
            <person name="Oukka M."/>
            <person name="Kuchroo V.K."/>
            <person name="Glimcher L.H."/>
        </authorList>
    </citation>
    <scope>INTERACTION WITH TBX21</scope>
</reference>
<reference key="11">
    <citation type="journal article" date="2025" name="Cell Metab.">
        <title>Piezo2 in sensory neurons regulates systemic and adipose tissue metabolism.</title>
        <authorList>
            <person name="Passini F.S."/>
            <person name="Bornstein B."/>
            <person name="Rubin S."/>
            <person name="Kuperman Y."/>
            <person name="Krief S."/>
            <person name="Masschelein E."/>
            <person name="Mehlman T."/>
            <person name="Brandis A."/>
            <person name="Addadi Y."/>
            <person name="Shalom S.H."/>
            <person name="Richter E.A."/>
            <person name="Yardeni T."/>
            <person name="Tirosh A."/>
            <person name="De Bock K."/>
            <person name="Zelzer E."/>
        </authorList>
    </citation>
    <scope>FUNCTION</scope>
    <scope>DISRUPTION PHENOTYPE</scope>
</reference>
<dbReference type="EMBL" id="AF155880">
    <property type="protein sequence ID" value="AAD38985.1"/>
    <property type="molecule type" value="mRNA"/>
</dbReference>
<dbReference type="EMBL" id="AL731718">
    <property type="status" value="NOT_ANNOTATED_CDS"/>
    <property type="molecule type" value="Genomic_DNA"/>
</dbReference>
<dbReference type="EMBL" id="CU459014">
    <property type="status" value="NOT_ANNOTATED_CDS"/>
    <property type="molecule type" value="Genomic_DNA"/>
</dbReference>
<dbReference type="EMBL" id="CU459015">
    <property type="status" value="NOT_ANNOTATED_CDS"/>
    <property type="molecule type" value="Genomic_DNA"/>
</dbReference>
<dbReference type="EMBL" id="CH466552">
    <property type="protein sequence ID" value="EDL29993.1"/>
    <property type="molecule type" value="Genomic_DNA"/>
</dbReference>
<dbReference type="EMBL" id="S78518">
    <property type="protein sequence ID" value="AAB34843.1"/>
    <property type="molecule type" value="Genomic_DNA"/>
</dbReference>
<dbReference type="EMBL" id="AF169246">
    <property type="protein sequence ID" value="AAD46381.1"/>
    <property type="molecule type" value="Genomic_DNA"/>
</dbReference>
<dbReference type="EMBL" id="AF321443">
    <property type="protein sequence ID" value="AAK11181.1"/>
    <property type="molecule type" value="Genomic_DNA"/>
</dbReference>
<dbReference type="CCDS" id="CCDS18782.1">
    <molecule id="Q64131-2"/>
</dbReference>
<dbReference type="CCDS" id="CCDS89843.1">
    <molecule id="Q64131-1"/>
</dbReference>
<dbReference type="PIR" id="A56842">
    <property type="entry name" value="A56842"/>
</dbReference>
<dbReference type="PIR" id="A56843">
    <property type="entry name" value="A56843"/>
</dbReference>
<dbReference type="RefSeq" id="NP_001355979.1">
    <molecule id="Q64131-1"/>
    <property type="nucleotide sequence ID" value="NM_001369050.1"/>
</dbReference>
<dbReference type="SMR" id="Q64131"/>
<dbReference type="DIP" id="DIP-60276N"/>
<dbReference type="ELM" id="Q64131"/>
<dbReference type="FunCoup" id="Q64131">
    <property type="interactions" value="2424"/>
</dbReference>
<dbReference type="IntAct" id="Q64131">
    <property type="interactions" value="1"/>
</dbReference>
<dbReference type="STRING" id="10090.ENSMUSP00000050353"/>
<dbReference type="GlyGen" id="Q64131">
    <property type="glycosylation" value="3 sites"/>
</dbReference>
<dbReference type="iPTMnet" id="Q64131"/>
<dbReference type="PhosphoSitePlus" id="Q64131"/>
<dbReference type="jPOST" id="Q64131"/>
<dbReference type="PaxDb" id="10090-ENSMUSP00000050353"/>
<dbReference type="ProteomicsDB" id="256844">
    <molecule id="Q64131-1"/>
</dbReference>
<dbReference type="ProteomicsDB" id="256845">
    <molecule id="Q64131-2"/>
</dbReference>
<dbReference type="Antibodypedia" id="1124">
    <property type="antibodies" value="717 antibodies from 42 providers"/>
</dbReference>
<dbReference type="Ensembl" id="ENSMUST00000119564.2">
    <molecule id="Q64131-1"/>
    <property type="protein sequence ID" value="ENSMUSP00000113159.2"/>
    <property type="gene ID" value="ENSMUSG00000070691.11"/>
</dbReference>
<dbReference type="GeneID" id="12399"/>
<dbReference type="UCSC" id="uc008vgc.1">
    <molecule id="Q64131-1"/>
    <property type="organism name" value="mouse"/>
</dbReference>
<dbReference type="AGR" id="MGI:102672"/>
<dbReference type="MGI" id="MGI:102672">
    <property type="gene designation" value="Runx3"/>
</dbReference>
<dbReference type="VEuPathDB" id="HostDB:ENSMUSG00000070691"/>
<dbReference type="eggNOG" id="KOG3982">
    <property type="taxonomic scope" value="Eukaryota"/>
</dbReference>
<dbReference type="GeneTree" id="ENSGT00940000156598"/>
<dbReference type="HOGENOM" id="CLU_032910_0_0_1"/>
<dbReference type="InParanoid" id="Q64131"/>
<dbReference type="Reactome" id="R-MMU-8941855">
    <property type="pathway name" value="RUNX3 regulates CDKN1A transcription"/>
</dbReference>
<dbReference type="Reactome" id="R-MMU-8941856">
    <property type="pathway name" value="RUNX3 regulates NOTCH signaling"/>
</dbReference>
<dbReference type="Reactome" id="R-MMU-8941858">
    <property type="pathway name" value="Regulation of RUNX3 expression and activity"/>
</dbReference>
<dbReference type="Reactome" id="R-MMU-8951430">
    <property type="pathway name" value="RUNX3 regulates WNT signaling"/>
</dbReference>
<dbReference type="Reactome" id="R-MMU-8951671">
    <property type="pathway name" value="RUNX3 regulates YAP1-mediated transcription"/>
</dbReference>
<dbReference type="Reactome" id="R-MMU-8951936">
    <property type="pathway name" value="RUNX3 regulates p14-ARF"/>
</dbReference>
<dbReference type="ChiTaRS" id="Runx3">
    <property type="organism name" value="mouse"/>
</dbReference>
<dbReference type="PRO" id="PR:Q64131"/>
<dbReference type="Proteomes" id="UP000000589">
    <property type="component" value="Chromosome 4"/>
</dbReference>
<dbReference type="RNAct" id="Q64131">
    <property type="molecule type" value="protein"/>
</dbReference>
<dbReference type="Bgee" id="ENSMUSG00000070691">
    <property type="expression patterns" value="Expressed in intramembranous bone and 167 other cell types or tissues"/>
</dbReference>
<dbReference type="ExpressionAtlas" id="Q64131">
    <property type="expression patterns" value="baseline and differential"/>
</dbReference>
<dbReference type="GO" id="GO:0000785">
    <property type="term" value="C:chromatin"/>
    <property type="evidence" value="ECO:0000314"/>
    <property type="project" value="BHF-UCL"/>
</dbReference>
<dbReference type="GO" id="GO:0016513">
    <property type="term" value="C:core-binding factor complex"/>
    <property type="evidence" value="ECO:0000304"/>
    <property type="project" value="UniProtKB"/>
</dbReference>
<dbReference type="GO" id="GO:0005737">
    <property type="term" value="C:cytoplasm"/>
    <property type="evidence" value="ECO:0000250"/>
    <property type="project" value="UniProtKB"/>
</dbReference>
<dbReference type="GO" id="GO:0005654">
    <property type="term" value="C:nucleoplasm"/>
    <property type="evidence" value="ECO:0000304"/>
    <property type="project" value="Reactome"/>
</dbReference>
<dbReference type="GO" id="GO:0005634">
    <property type="term" value="C:nucleus"/>
    <property type="evidence" value="ECO:0000314"/>
    <property type="project" value="MGI"/>
</dbReference>
<dbReference type="GO" id="GO:0005524">
    <property type="term" value="F:ATP binding"/>
    <property type="evidence" value="ECO:0007669"/>
    <property type="project" value="InterPro"/>
</dbReference>
<dbReference type="GO" id="GO:0003677">
    <property type="term" value="F:DNA binding"/>
    <property type="evidence" value="ECO:0000314"/>
    <property type="project" value="MGI"/>
</dbReference>
<dbReference type="GO" id="GO:0000981">
    <property type="term" value="F:DNA-binding transcription factor activity, RNA polymerase II-specific"/>
    <property type="evidence" value="ECO:0000314"/>
    <property type="project" value="BHF-UCL"/>
</dbReference>
<dbReference type="GO" id="GO:0042826">
    <property type="term" value="F:histone deacetylase binding"/>
    <property type="evidence" value="ECO:0000266"/>
    <property type="project" value="MGI"/>
</dbReference>
<dbReference type="GO" id="GO:0000977">
    <property type="term" value="F:RNA polymerase II transcription regulatory region sequence-specific DNA binding"/>
    <property type="evidence" value="ECO:0000314"/>
    <property type="project" value="BHF-UCL"/>
</dbReference>
<dbReference type="GO" id="GO:0046332">
    <property type="term" value="F:SMAD binding"/>
    <property type="evidence" value="ECO:0000266"/>
    <property type="project" value="MGI"/>
</dbReference>
<dbReference type="GO" id="GO:0007411">
    <property type="term" value="P:axon guidance"/>
    <property type="evidence" value="ECO:0000315"/>
    <property type="project" value="MGI"/>
</dbReference>
<dbReference type="GO" id="GO:0048469">
    <property type="term" value="P:cell maturation"/>
    <property type="evidence" value="ECO:0000316"/>
    <property type="project" value="MGI"/>
</dbReference>
<dbReference type="GO" id="GO:0002062">
    <property type="term" value="P:chondrocyte differentiation"/>
    <property type="evidence" value="ECO:0000316"/>
    <property type="project" value="MGI"/>
</dbReference>
<dbReference type="GO" id="GO:0031069">
    <property type="term" value="P:hair follicle morphogenesis"/>
    <property type="evidence" value="ECO:0000315"/>
    <property type="project" value="MGI"/>
</dbReference>
<dbReference type="GO" id="GO:0043371">
    <property type="term" value="P:negative regulation of CD4-positive, alpha-beta T cell differentiation"/>
    <property type="evidence" value="ECO:0000315"/>
    <property type="project" value="UniProtKB"/>
</dbReference>
<dbReference type="GO" id="GO:0045786">
    <property type="term" value="P:negative regulation of cell cycle"/>
    <property type="evidence" value="ECO:0000315"/>
    <property type="project" value="UniProtKB"/>
</dbReference>
<dbReference type="GO" id="GO:0050680">
    <property type="term" value="P:negative regulation of epithelial cell proliferation"/>
    <property type="evidence" value="ECO:0000315"/>
    <property type="project" value="UniProtKB"/>
</dbReference>
<dbReference type="GO" id="GO:0000122">
    <property type="term" value="P:negative regulation of transcription by RNA polymerase II"/>
    <property type="evidence" value="ECO:0000314"/>
    <property type="project" value="UniProtKB"/>
</dbReference>
<dbReference type="GO" id="GO:0031175">
    <property type="term" value="P:neuron projection development"/>
    <property type="evidence" value="ECO:0000315"/>
    <property type="project" value="MGI"/>
</dbReference>
<dbReference type="GO" id="GO:0043378">
    <property type="term" value="P:positive regulation of CD8-positive, alpha-beta T cell differentiation"/>
    <property type="evidence" value="ECO:0000315"/>
    <property type="project" value="UniProtKB"/>
</dbReference>
<dbReference type="GO" id="GO:0045893">
    <property type="term" value="P:positive regulation of DNA-templated transcription"/>
    <property type="evidence" value="ECO:0000250"/>
    <property type="project" value="UniProtKB"/>
</dbReference>
<dbReference type="GO" id="GO:2001238">
    <property type="term" value="P:positive regulation of extrinsic apoptotic signaling pathway"/>
    <property type="evidence" value="ECO:0000315"/>
    <property type="project" value="MGI"/>
</dbReference>
<dbReference type="GO" id="GO:0045944">
    <property type="term" value="P:positive regulation of transcription by RNA polymerase II"/>
    <property type="evidence" value="ECO:0000266"/>
    <property type="project" value="MGI"/>
</dbReference>
<dbReference type="GO" id="GO:0006468">
    <property type="term" value="P:protein phosphorylation"/>
    <property type="evidence" value="ECO:0000250"/>
    <property type="project" value="UniProtKB"/>
</dbReference>
<dbReference type="GO" id="GO:0071559">
    <property type="term" value="P:response to transforming growth factor beta"/>
    <property type="evidence" value="ECO:0000250"/>
    <property type="project" value="UniProtKB"/>
</dbReference>
<dbReference type="FunFam" id="2.60.40.720:FF:000001">
    <property type="entry name" value="Runt-related transcription factor"/>
    <property type="match status" value="1"/>
</dbReference>
<dbReference type="Gene3D" id="2.60.40.720">
    <property type="match status" value="1"/>
</dbReference>
<dbReference type="InterPro" id="IPR000040">
    <property type="entry name" value="AML1_Runt"/>
</dbReference>
<dbReference type="InterPro" id="IPR008967">
    <property type="entry name" value="p53-like_TF_DNA-bd_sf"/>
</dbReference>
<dbReference type="InterPro" id="IPR012346">
    <property type="entry name" value="p53/RUNT-type_TF_DNA-bd_sf"/>
</dbReference>
<dbReference type="InterPro" id="IPR013524">
    <property type="entry name" value="Runt_dom"/>
</dbReference>
<dbReference type="InterPro" id="IPR013711">
    <property type="entry name" value="RunxI_C_dom"/>
</dbReference>
<dbReference type="InterPro" id="IPR016554">
    <property type="entry name" value="TF_Runt-rel_RUNX"/>
</dbReference>
<dbReference type="PANTHER" id="PTHR11950">
    <property type="entry name" value="RUNT RELATED"/>
    <property type="match status" value="1"/>
</dbReference>
<dbReference type="PANTHER" id="PTHR11950:SF43">
    <property type="entry name" value="RUNT-RELATED TRANSCRIPTION FACTOR 3"/>
    <property type="match status" value="1"/>
</dbReference>
<dbReference type="Pfam" id="PF00853">
    <property type="entry name" value="Runt"/>
    <property type="match status" value="1"/>
</dbReference>
<dbReference type="Pfam" id="PF08504">
    <property type="entry name" value="RunxI"/>
    <property type="match status" value="1"/>
</dbReference>
<dbReference type="PIRSF" id="PIRSF009374">
    <property type="entry name" value="TF_Runt-rel_RUNX"/>
    <property type="match status" value="1"/>
</dbReference>
<dbReference type="PRINTS" id="PR00967">
    <property type="entry name" value="ONCOGENEAML1"/>
</dbReference>
<dbReference type="SUPFAM" id="SSF49417">
    <property type="entry name" value="p53-like transcription factors"/>
    <property type="match status" value="1"/>
</dbReference>
<dbReference type="PROSITE" id="PS51062">
    <property type="entry name" value="RUNT"/>
    <property type="match status" value="1"/>
</dbReference>
<protein>
    <recommendedName>
        <fullName>Runt-related transcription factor 3</fullName>
    </recommendedName>
    <alternativeName>
        <fullName>Acute myeloid leukemia 2 protein</fullName>
    </alternativeName>
    <alternativeName>
        <fullName>Core-binding factor subunit alpha-3</fullName>
        <shortName>CBF-alpha-3</shortName>
    </alternativeName>
    <alternativeName>
        <fullName>Oncogene AML-2</fullName>
    </alternativeName>
    <alternativeName>
        <fullName>Polyomavirus enhancer-binding protein 2 alpha C subunit</fullName>
        <shortName>PEA2-alpha C</shortName>
        <shortName>PEBP2-alpha C</shortName>
    </alternativeName>
    <alternativeName>
        <fullName>SL3-3 enhancer factor 1 alpha C subunit</fullName>
    </alternativeName>
    <alternativeName>
        <fullName>SL3/AKV core-binding factor alpha C subunit</fullName>
    </alternativeName>
</protein>
<organism>
    <name type="scientific">Mus musculus</name>
    <name type="common">Mouse</name>
    <dbReference type="NCBI Taxonomy" id="10090"/>
    <lineage>
        <taxon>Eukaryota</taxon>
        <taxon>Metazoa</taxon>
        <taxon>Chordata</taxon>
        <taxon>Craniata</taxon>
        <taxon>Vertebrata</taxon>
        <taxon>Euteleostomi</taxon>
        <taxon>Mammalia</taxon>
        <taxon>Eutheria</taxon>
        <taxon>Euarchontoglires</taxon>
        <taxon>Glires</taxon>
        <taxon>Rodentia</taxon>
        <taxon>Myomorpha</taxon>
        <taxon>Muroidea</taxon>
        <taxon>Muridae</taxon>
        <taxon>Murinae</taxon>
        <taxon>Mus</taxon>
        <taxon>Mus</taxon>
    </lineage>
</organism>
<evidence type="ECO:0000250" key="1"/>
<evidence type="ECO:0000250" key="2">
    <source>
        <dbReference type="UniProtKB" id="Q13761"/>
    </source>
</evidence>
<evidence type="ECO:0000255" key="3">
    <source>
        <dbReference type="PROSITE-ProRule" id="PRU00399"/>
    </source>
</evidence>
<evidence type="ECO:0000256" key="4">
    <source>
        <dbReference type="SAM" id="MobiDB-lite"/>
    </source>
</evidence>
<evidence type="ECO:0000269" key="5">
    <source>
    </source>
</evidence>
<evidence type="ECO:0000269" key="6">
    <source>
    </source>
</evidence>
<evidence type="ECO:0000269" key="7">
    <source>
    </source>
</evidence>
<evidence type="ECO:0000269" key="8">
    <source>
    </source>
</evidence>
<evidence type="ECO:0000305" key="9"/>
<evidence type="ECO:0000305" key="10">
    <source>
    </source>
</evidence>